<accession>Q16557</accession>
<accession>Q08265</accession>
<accession>Q9BRW2</accession>
<accession>Q9UPL4</accession>
<accession>Q9UQ77</accession>
<feature type="signal peptide" evidence="1">
    <location>
        <begin position="1"/>
        <end position="34"/>
    </location>
</feature>
<feature type="chain" id="PRO_0000014910" description="Pregnancy-specific beta-1-glycoprotein 3">
    <location>
        <begin position="35"/>
        <end position="428"/>
    </location>
</feature>
<feature type="domain" description="Ig-like V-type">
    <location>
        <begin position="35"/>
        <end position="144"/>
    </location>
</feature>
<feature type="domain" description="Ig-like C2-type 1">
    <location>
        <begin position="147"/>
        <end position="234"/>
    </location>
</feature>
<feature type="domain" description="Ig-like C2-type 2">
    <location>
        <begin position="240"/>
        <end position="327"/>
    </location>
</feature>
<feature type="domain" description="Ig-like C2-type 3">
    <location>
        <begin position="335"/>
        <end position="410"/>
    </location>
</feature>
<feature type="short sequence motif" description="Cell attachment site" evidence="1">
    <location>
        <begin position="127"/>
        <end position="129"/>
    </location>
</feature>
<feature type="glycosylation site" description="N-linked (GlcNAc...) asparagine" evidence="1">
    <location>
        <position position="104"/>
    </location>
</feature>
<feature type="glycosylation site" description="N-linked (GlcNAc...) asparagine" evidence="1">
    <location>
        <position position="111"/>
    </location>
</feature>
<feature type="glycosylation site" description="N-linked (GlcNAc...) asparagine" evidence="1">
    <location>
        <position position="268"/>
    </location>
</feature>
<feature type="glycosylation site" description="N-linked (GlcNAc...) asparagine" evidence="1">
    <location>
        <position position="303"/>
    </location>
</feature>
<feature type="disulfide bond" evidence="6">
    <location>
        <begin position="169"/>
        <end position="217"/>
    </location>
</feature>
<feature type="disulfide bond" evidence="6">
    <location>
        <begin position="262"/>
        <end position="310"/>
    </location>
</feature>
<feature type="disulfide bond" evidence="6">
    <location>
        <begin position="354"/>
        <end position="394"/>
    </location>
</feature>
<feature type="sequence variant" id="VAR_026722" description="In dbSNP:rs11559136." evidence="2 3 4 5">
    <original>L</original>
    <variation>S</variation>
    <location>
        <position position="23"/>
    </location>
</feature>
<feature type="sequence variant" id="VAR_015679" description="In dbSNP:rs12185496." evidence="2 3 4 5">
    <original>L</original>
    <variation>P</variation>
    <location>
        <position position="30"/>
    </location>
</feature>
<feature type="sequence variant" id="VAR_059409" description="In dbSNP:rs12185496.">
    <original>L</original>
    <variation>S</variation>
    <location>
        <position position="30"/>
    </location>
</feature>
<feature type="sequence variant" id="VAR_026723" description="In dbSNP:rs16976174.">
    <original>N</original>
    <variation>T</variation>
    <location>
        <position position="198"/>
    </location>
</feature>
<feature type="sequence variant" id="VAR_049921" description="In dbSNP:rs17173152.">
    <original>K</original>
    <variation>N</variation>
    <location>
        <position position="199"/>
    </location>
</feature>
<feature type="sequence variant" id="VAR_061323" description="In dbSNP:rs28698193.">
    <original>I</original>
    <variation>N</variation>
    <location>
        <position position="290"/>
    </location>
</feature>
<feature type="sequence conflict" description="In Ref. 9." evidence="6" ref="9">
    <location>
        <begin position="330"/>
        <end position="383"/>
    </location>
</feature>
<feature type="sequence conflict" description="In Ref. 7; AAH05924." evidence="6" ref="7">
    <original>K</original>
    <variation>E</variation>
    <location>
        <position position="412"/>
    </location>
</feature>
<proteinExistence type="evidence at protein level"/>
<sequence length="428" mass="47945">MGPLSAPPCTQRITWKGLLLTALLLNFWNLPTTAQVTIEAEPTKVSKGKDVLLLVHNLPQNLAGYIWYKGQMKDLYHYITSYVVDGQIIIYGPAYSGRETVYSNASLLIQNVTREDAGSYTLHIVKRGDGTRGETGHFTFTLYLETPKPSISSSNLYPREDMEAVSLTCDPETPDASYLWWMNGQSLPMTHSLQLSKNKRTLFLFGVTKYTAGPYECEIRNPVSASRSDPVTLNLLPKLPKPYITINNLNPRENKDVLAFTCEPKSENYTYIWWLNGQSLPVSPRVKRPIENRILILPSVTRNETGPYQCEIQDRYGGIRSYPVTLNVLYGPDLPRIYPSFTYYHSGENLYLSCFADSNPPAEYSWTINGKFQLSGQKLFIPQITTKHSGLYACSVRNSATGMESSKSMTVKVSAPSGTGHLPGLNPL</sequence>
<name>PSG3_HUMAN</name>
<reference key="1">
    <citation type="journal article" date="1990" name="Genomics">
        <title>Structure, evolution and chromosomal localization of the human pregnancy-specific beta 1 glycoprotein gene family.</title>
        <authorList>
            <person name="Streydio C."/>
            <person name="Swillens S."/>
            <person name="Georges M."/>
            <person name="Szpirer C."/>
            <person name="Vassart G."/>
        </authorList>
    </citation>
    <scope>NUCLEOTIDE SEQUENCE [MRNA]</scope>
    <scope>VARIANTS SER-23 AND PRO-30</scope>
</reference>
<reference key="2">
    <citation type="journal article" date="1990" name="Genomics">
        <authorList>
            <person name="Streydio C."/>
            <person name="Swillens S."/>
            <person name="Georges M."/>
            <person name="Szpirer C."/>
            <person name="Vassart G."/>
        </authorList>
    </citation>
    <scope>ERRATUM OF PUBMED:2341148</scope>
</reference>
<reference key="3">
    <citation type="journal article" date="1988" name="Gene">
        <title>Molecular cloning of a cDNA for human pregnancy-specific beta 1-glycoprotein: homology with human carcinoembryonic antigen and related proteins.</title>
        <authorList>
            <person name="Rooney B.C."/>
            <person name="Horne C.H."/>
            <person name="Hardman N."/>
        </authorList>
    </citation>
    <scope>NUCLEOTIDE SEQUENCE [MRNA]</scope>
    <scope>VARIANTS SER-23 AND PRO-30</scope>
</reference>
<reference key="4">
    <citation type="journal article" date="1990" name="Biochem. Biophys. Res. Commun.">
        <title>Carcinoembryonic antigen gene family members in submandibular salivary gland: demonstration of pregnancy-specific glycoproteins by cDNA cloning.</title>
        <authorList>
            <person name="Zoubir F."/>
            <person name="Khan W.N."/>
            <person name="Hammarstroem S."/>
        </authorList>
    </citation>
    <scope>NUCLEOTIDE SEQUENCE [MRNA]</scope>
    <scope>VARIANTS SER-23 AND PRO-30</scope>
</reference>
<reference key="5">
    <citation type="journal article" date="1993" name="Mol. Cell. Biochem.">
        <title>Pregnancy specific beta 1-glycoprotein in human intestine.</title>
        <authorList>
            <person name="Shupert W.L."/>
            <person name="Chan W.Y."/>
        </authorList>
    </citation>
    <scope>NUCLEOTIDE SEQUENCE [MRNA]</scope>
    <source>
        <tissue>Colon</tissue>
    </source>
</reference>
<reference key="6">
    <citation type="journal article" date="2004" name="Nature">
        <title>The DNA sequence and biology of human chromosome 19.</title>
        <authorList>
            <person name="Grimwood J."/>
            <person name="Gordon L.A."/>
            <person name="Olsen A.S."/>
            <person name="Terry A."/>
            <person name="Schmutz J."/>
            <person name="Lamerdin J.E."/>
            <person name="Hellsten U."/>
            <person name="Goodstein D."/>
            <person name="Couronne O."/>
            <person name="Tran-Gyamfi M."/>
            <person name="Aerts A."/>
            <person name="Altherr M."/>
            <person name="Ashworth L."/>
            <person name="Bajorek E."/>
            <person name="Black S."/>
            <person name="Branscomb E."/>
            <person name="Caenepeel S."/>
            <person name="Carrano A.V."/>
            <person name="Caoile C."/>
            <person name="Chan Y.M."/>
            <person name="Christensen M."/>
            <person name="Cleland C.A."/>
            <person name="Copeland A."/>
            <person name="Dalin E."/>
            <person name="Dehal P."/>
            <person name="Denys M."/>
            <person name="Detter J.C."/>
            <person name="Escobar J."/>
            <person name="Flowers D."/>
            <person name="Fotopulos D."/>
            <person name="Garcia C."/>
            <person name="Georgescu A.M."/>
            <person name="Glavina T."/>
            <person name="Gomez M."/>
            <person name="Gonzales E."/>
            <person name="Groza M."/>
            <person name="Hammon N."/>
            <person name="Hawkins T."/>
            <person name="Haydu L."/>
            <person name="Ho I."/>
            <person name="Huang W."/>
            <person name="Israni S."/>
            <person name="Jett J."/>
            <person name="Kadner K."/>
            <person name="Kimball H."/>
            <person name="Kobayashi A."/>
            <person name="Larionov V."/>
            <person name="Leem S.-H."/>
            <person name="Lopez F."/>
            <person name="Lou Y."/>
            <person name="Lowry S."/>
            <person name="Malfatti S."/>
            <person name="Martinez D."/>
            <person name="McCready P.M."/>
            <person name="Medina C."/>
            <person name="Morgan J."/>
            <person name="Nelson K."/>
            <person name="Nolan M."/>
            <person name="Ovcharenko I."/>
            <person name="Pitluck S."/>
            <person name="Pollard M."/>
            <person name="Popkie A.P."/>
            <person name="Predki P."/>
            <person name="Quan G."/>
            <person name="Ramirez L."/>
            <person name="Rash S."/>
            <person name="Retterer J."/>
            <person name="Rodriguez A."/>
            <person name="Rogers S."/>
            <person name="Salamov A."/>
            <person name="Salazar A."/>
            <person name="She X."/>
            <person name="Smith D."/>
            <person name="Slezak T."/>
            <person name="Solovyev V."/>
            <person name="Thayer N."/>
            <person name="Tice H."/>
            <person name="Tsai M."/>
            <person name="Ustaszewska A."/>
            <person name="Vo N."/>
            <person name="Wagner M."/>
            <person name="Wheeler J."/>
            <person name="Wu K."/>
            <person name="Xie G."/>
            <person name="Yang J."/>
            <person name="Dubchak I."/>
            <person name="Furey T.S."/>
            <person name="DeJong P."/>
            <person name="Dickson M."/>
            <person name="Gordon D."/>
            <person name="Eichler E.E."/>
            <person name="Pennacchio L.A."/>
            <person name="Richardson P."/>
            <person name="Stubbs L."/>
            <person name="Rokhsar D.S."/>
            <person name="Myers R.M."/>
            <person name="Rubin E.M."/>
            <person name="Lucas S.M."/>
        </authorList>
    </citation>
    <scope>NUCLEOTIDE SEQUENCE [LARGE SCALE GENOMIC DNA]</scope>
</reference>
<reference key="7">
    <citation type="journal article" date="2004" name="Genome Res.">
        <title>The status, quality, and expansion of the NIH full-length cDNA project: the Mammalian Gene Collection (MGC).</title>
        <authorList>
            <consortium name="The MGC Project Team"/>
        </authorList>
    </citation>
    <scope>NUCLEOTIDE SEQUENCE [LARGE SCALE MRNA]</scope>
    <source>
        <tissue>Placenta</tissue>
    </source>
</reference>
<reference key="8">
    <citation type="submission" date="1998-11" db="EMBL/GenBank/DDBJ databases">
        <title>Characterization of upstream promotor region, exon 1 and exon 2 of the PSG gene family.</title>
        <authorList>
            <person name="Fraengsmyr L."/>
            <person name="Teglund S."/>
            <person name="Israelsson A."/>
            <person name="Hammarstroem S."/>
        </authorList>
    </citation>
    <scope>NUCLEOTIDE SEQUENCE [GENOMIC DNA] OF 1-143</scope>
</reference>
<reference key="9">
    <citation type="journal article" date="1990" name="Biochem. Biophys. Res. Commun.">
        <title>Expression of the pregnancy-specific beta 1-glycoprotein genes in human testis.</title>
        <authorList>
            <person name="Borjigin J."/>
            <person name="Tease L.A."/>
            <person name="Barnes W."/>
            <person name="Chan W.-Y."/>
        </authorList>
    </citation>
    <scope>NUCLEOTIDE SEQUENCE [MRNA] OF 23-428</scope>
    <scope>VARIANTS SER-23 AND PRO-30</scope>
    <source>
        <tissue>Testis</tissue>
    </source>
</reference>
<keyword id="KW-1015">Disulfide bond</keyword>
<keyword id="KW-0325">Glycoprotein</keyword>
<keyword id="KW-0393">Immunoglobulin domain</keyword>
<keyword id="KW-1267">Proteomics identification</keyword>
<keyword id="KW-1185">Reference proteome</keyword>
<keyword id="KW-0677">Repeat</keyword>
<keyword id="KW-0964">Secreted</keyword>
<keyword id="KW-0732">Signal</keyword>
<protein>
    <recommendedName>
        <fullName>Pregnancy-specific beta-1-glycoprotein 3</fullName>
        <shortName>PS-beta-G-3</shortName>
        <shortName>PSBG-3</shortName>
        <shortName>Pregnancy-specific glycoprotein 3</shortName>
    </recommendedName>
    <alternativeName>
        <fullName>Carcinoembryonic antigen SG5</fullName>
    </alternativeName>
</protein>
<organism>
    <name type="scientific">Homo sapiens</name>
    <name type="common">Human</name>
    <dbReference type="NCBI Taxonomy" id="9606"/>
    <lineage>
        <taxon>Eukaryota</taxon>
        <taxon>Metazoa</taxon>
        <taxon>Chordata</taxon>
        <taxon>Craniata</taxon>
        <taxon>Vertebrata</taxon>
        <taxon>Euteleostomi</taxon>
        <taxon>Mammalia</taxon>
        <taxon>Eutheria</taxon>
        <taxon>Euarchontoglires</taxon>
        <taxon>Primates</taxon>
        <taxon>Haplorrhini</taxon>
        <taxon>Catarrhini</taxon>
        <taxon>Hominidae</taxon>
        <taxon>Homo</taxon>
    </lineage>
</organism>
<gene>
    <name type="primary">PSG3</name>
</gene>
<dbReference type="EMBL" id="M34420">
    <property type="protein sequence ID" value="AAA52606.1"/>
    <property type="molecule type" value="mRNA"/>
</dbReference>
<dbReference type="EMBL" id="M23575">
    <property type="protein sequence ID" value="AAA52607.1"/>
    <property type="molecule type" value="mRNA"/>
</dbReference>
<dbReference type="EMBL" id="M37399">
    <property type="protein sequence ID" value="AAA60958.1"/>
    <property type="molecule type" value="mRNA"/>
</dbReference>
<dbReference type="EMBL" id="M93061">
    <property type="protein sequence ID" value="AAA60207.1"/>
    <property type="molecule type" value="mRNA"/>
</dbReference>
<dbReference type="EMBL" id="S59493">
    <property type="protein sequence ID" value="AAC60584.1"/>
    <property type="molecule type" value="mRNA"/>
</dbReference>
<dbReference type="EMBL" id="AC004654">
    <property type="protein sequence ID" value="AAC15513.1"/>
    <property type="molecule type" value="Genomic_DNA"/>
</dbReference>
<dbReference type="EMBL" id="AC005337">
    <property type="status" value="NOT_ANNOTATED_CDS"/>
    <property type="molecule type" value="Genomic_DNA"/>
</dbReference>
<dbReference type="EMBL" id="BC005924">
    <property type="protein sequence ID" value="AAH05924.2"/>
    <property type="molecule type" value="mRNA"/>
</dbReference>
<dbReference type="EMBL" id="AH007624">
    <property type="protein sequence ID" value="AAD28498.1"/>
    <property type="molecule type" value="Genomic_DNA"/>
</dbReference>
<dbReference type="CCDS" id="CCDS12611.1"/>
<dbReference type="PIR" id="I57486">
    <property type="entry name" value="I57486"/>
</dbReference>
<dbReference type="PIR" id="JS0032">
    <property type="entry name" value="JS0032"/>
</dbReference>
<dbReference type="RefSeq" id="NP_066296.2">
    <property type="nucleotide sequence ID" value="NM_021016.4"/>
</dbReference>
<dbReference type="SMR" id="Q16557"/>
<dbReference type="BioGRID" id="111646">
    <property type="interactions" value="22"/>
</dbReference>
<dbReference type="FunCoup" id="Q16557">
    <property type="interactions" value="69"/>
</dbReference>
<dbReference type="IntAct" id="Q16557">
    <property type="interactions" value="18"/>
</dbReference>
<dbReference type="MINT" id="Q16557"/>
<dbReference type="STRING" id="9606.ENSP00000332215"/>
<dbReference type="GlyCosmos" id="Q16557">
    <property type="glycosylation" value="4 sites, No reported glycans"/>
</dbReference>
<dbReference type="GlyGen" id="Q16557">
    <property type="glycosylation" value="4 sites"/>
</dbReference>
<dbReference type="iPTMnet" id="Q16557"/>
<dbReference type="PhosphoSitePlus" id="Q16557"/>
<dbReference type="BioMuta" id="PSG3"/>
<dbReference type="DMDM" id="108935880"/>
<dbReference type="jPOST" id="Q16557"/>
<dbReference type="MassIVE" id="Q16557"/>
<dbReference type="PaxDb" id="9606-ENSP00000332215"/>
<dbReference type="PeptideAtlas" id="Q16557"/>
<dbReference type="ProteomicsDB" id="60913"/>
<dbReference type="TopDownProteomics" id="Q16557"/>
<dbReference type="Antibodypedia" id="21555">
    <property type="antibodies" value="146 antibodies from 26 providers"/>
</dbReference>
<dbReference type="DNASU" id="5671"/>
<dbReference type="Ensembl" id="ENST00000327495.10">
    <property type="protein sequence ID" value="ENSP00000332215.5"/>
    <property type="gene ID" value="ENSG00000221826.10"/>
</dbReference>
<dbReference type="Ensembl" id="ENST00000614582.1">
    <property type="protein sequence ID" value="ENSP00000480223.1"/>
    <property type="gene ID" value="ENSG00000221826.10"/>
</dbReference>
<dbReference type="GeneID" id="5671"/>
<dbReference type="KEGG" id="hsa:5671"/>
<dbReference type="MANE-Select" id="ENST00000327495.10">
    <property type="protein sequence ID" value="ENSP00000332215.5"/>
    <property type="RefSeq nucleotide sequence ID" value="NM_021016.4"/>
    <property type="RefSeq protein sequence ID" value="NP_066296.2"/>
</dbReference>
<dbReference type="UCSC" id="uc002oue.4">
    <property type="organism name" value="human"/>
</dbReference>
<dbReference type="AGR" id="HGNC:9520"/>
<dbReference type="CTD" id="5671"/>
<dbReference type="GeneCards" id="PSG3"/>
<dbReference type="HGNC" id="HGNC:9520">
    <property type="gene designation" value="PSG3"/>
</dbReference>
<dbReference type="HPA" id="ENSG00000221826">
    <property type="expression patterns" value="Tissue enriched (placenta)"/>
</dbReference>
<dbReference type="MIM" id="176392">
    <property type="type" value="gene"/>
</dbReference>
<dbReference type="neXtProt" id="NX_Q16557"/>
<dbReference type="OpenTargets" id="ENSG00000221826"/>
<dbReference type="PharmGKB" id="PA33865"/>
<dbReference type="VEuPathDB" id="HostDB:ENSG00000221826"/>
<dbReference type="eggNOG" id="ENOG502RXPD">
    <property type="taxonomic scope" value="Eukaryota"/>
</dbReference>
<dbReference type="GeneTree" id="ENSGT01100000263479"/>
<dbReference type="HOGENOM" id="CLU_024555_2_0_1"/>
<dbReference type="InParanoid" id="Q16557"/>
<dbReference type="OMA" id="TWTINRK"/>
<dbReference type="OrthoDB" id="9050348at2759"/>
<dbReference type="PAN-GO" id="Q16557">
    <property type="GO annotations" value="5 GO annotations based on evolutionary models"/>
</dbReference>
<dbReference type="PhylomeDB" id="Q16557"/>
<dbReference type="TreeFam" id="TF336859"/>
<dbReference type="PathwayCommons" id="Q16557"/>
<dbReference type="Reactome" id="R-HSA-202733">
    <property type="pathway name" value="Cell surface interactions at the vascular wall"/>
</dbReference>
<dbReference type="SignaLink" id="Q16557"/>
<dbReference type="BioGRID-ORCS" id="5671">
    <property type="hits" value="14 hits in 1054 CRISPR screens"/>
</dbReference>
<dbReference type="ChiTaRS" id="PSG3">
    <property type="organism name" value="human"/>
</dbReference>
<dbReference type="GeneWiki" id="PSG3"/>
<dbReference type="GenomeRNAi" id="5671"/>
<dbReference type="Pharos" id="Q16557">
    <property type="development level" value="Tbio"/>
</dbReference>
<dbReference type="PRO" id="PR:Q16557"/>
<dbReference type="Proteomes" id="UP000005640">
    <property type="component" value="Chromosome 19"/>
</dbReference>
<dbReference type="RNAct" id="Q16557">
    <property type="molecule type" value="protein"/>
</dbReference>
<dbReference type="Bgee" id="ENSG00000221826">
    <property type="expression patterns" value="Expressed in placenta and 76 other cell types or tissues"/>
</dbReference>
<dbReference type="ExpressionAtlas" id="Q16557">
    <property type="expression patterns" value="baseline and differential"/>
</dbReference>
<dbReference type="GO" id="GO:0005576">
    <property type="term" value="C:extracellular region"/>
    <property type="evidence" value="ECO:0007669"/>
    <property type="project" value="UniProtKB-SubCell"/>
</dbReference>
<dbReference type="GO" id="GO:0006952">
    <property type="term" value="P:defense response"/>
    <property type="evidence" value="ECO:0000304"/>
    <property type="project" value="UniProtKB"/>
</dbReference>
<dbReference type="GO" id="GO:0007565">
    <property type="term" value="P:female pregnancy"/>
    <property type="evidence" value="ECO:0000304"/>
    <property type="project" value="UniProtKB"/>
</dbReference>
<dbReference type="CDD" id="cd20948">
    <property type="entry name" value="IgC2_CEACAM5-like"/>
    <property type="match status" value="1"/>
</dbReference>
<dbReference type="CDD" id="cd05740">
    <property type="entry name" value="IgI_hCEACAM_2_4_6_like"/>
    <property type="match status" value="1"/>
</dbReference>
<dbReference type="CDD" id="cd05774">
    <property type="entry name" value="IgV_CEACAM_D1"/>
    <property type="match status" value="1"/>
</dbReference>
<dbReference type="FunFam" id="2.60.40.10:FF:000340">
    <property type="entry name" value="Carcinoembryonic antigen-related cell adhesion molecule 1"/>
    <property type="match status" value="1"/>
</dbReference>
<dbReference type="FunFam" id="2.60.40.10:FF:000517">
    <property type="entry name" value="Carcinoembryonic antigen-related cell adhesion molecule 1"/>
    <property type="match status" value="1"/>
</dbReference>
<dbReference type="FunFam" id="2.60.40.10:FF:000244">
    <property type="entry name" value="carcinoembryonic antigen-related cell adhesion molecule 16"/>
    <property type="match status" value="2"/>
</dbReference>
<dbReference type="Gene3D" id="2.60.40.10">
    <property type="entry name" value="Immunoglobulins"/>
    <property type="match status" value="4"/>
</dbReference>
<dbReference type="InterPro" id="IPR050831">
    <property type="entry name" value="CEA_cell_adhesion"/>
</dbReference>
<dbReference type="InterPro" id="IPR007110">
    <property type="entry name" value="Ig-like_dom"/>
</dbReference>
<dbReference type="InterPro" id="IPR036179">
    <property type="entry name" value="Ig-like_dom_sf"/>
</dbReference>
<dbReference type="InterPro" id="IPR013783">
    <property type="entry name" value="Ig-like_fold"/>
</dbReference>
<dbReference type="InterPro" id="IPR003599">
    <property type="entry name" value="Ig_sub"/>
</dbReference>
<dbReference type="InterPro" id="IPR003598">
    <property type="entry name" value="Ig_sub2"/>
</dbReference>
<dbReference type="InterPro" id="IPR013106">
    <property type="entry name" value="Ig_V-set"/>
</dbReference>
<dbReference type="PANTHER" id="PTHR44427">
    <property type="entry name" value="CARCINOEMBRYONIC ANTIGEN-RELATED CELL ADHESION MOLECULE 19"/>
    <property type="match status" value="1"/>
</dbReference>
<dbReference type="PANTHER" id="PTHR44427:SF12">
    <property type="entry name" value="PREGNANCY-SPECIFIC BETA-1-GLYCOPROTEIN 3"/>
    <property type="match status" value="1"/>
</dbReference>
<dbReference type="Pfam" id="PF13895">
    <property type="entry name" value="Ig_2"/>
    <property type="match status" value="1"/>
</dbReference>
<dbReference type="Pfam" id="PF13927">
    <property type="entry name" value="Ig_3"/>
    <property type="match status" value="2"/>
</dbReference>
<dbReference type="Pfam" id="PF07686">
    <property type="entry name" value="V-set"/>
    <property type="match status" value="1"/>
</dbReference>
<dbReference type="SMART" id="SM00409">
    <property type="entry name" value="IG"/>
    <property type="match status" value="4"/>
</dbReference>
<dbReference type="SMART" id="SM00408">
    <property type="entry name" value="IGc2"/>
    <property type="match status" value="3"/>
</dbReference>
<dbReference type="SUPFAM" id="SSF48726">
    <property type="entry name" value="Immunoglobulin"/>
    <property type="match status" value="4"/>
</dbReference>
<dbReference type="PROSITE" id="PS50835">
    <property type="entry name" value="IG_LIKE"/>
    <property type="match status" value="3"/>
</dbReference>
<comment type="subcellular location">
    <subcellularLocation>
        <location evidence="6">Secreted</location>
    </subcellularLocation>
</comment>
<comment type="developmental stage">
    <text>PSBG are produced in high quantity during pregnancy.</text>
</comment>
<comment type="similarity">
    <text evidence="6">Belongs to the immunoglobulin superfamily. CEA family.</text>
</comment>
<evidence type="ECO:0000255" key="1"/>
<evidence type="ECO:0000269" key="2">
    <source>
    </source>
</evidence>
<evidence type="ECO:0000269" key="3">
    <source>
    </source>
</evidence>
<evidence type="ECO:0000269" key="4">
    <source>
    </source>
</evidence>
<evidence type="ECO:0000269" key="5">
    <source>
    </source>
</evidence>
<evidence type="ECO:0000305" key="6"/>